<evidence type="ECO:0000255" key="1">
    <source>
        <dbReference type="HAMAP-Rule" id="MF_00818"/>
    </source>
</evidence>
<protein>
    <recommendedName>
        <fullName evidence="1">NADPH-dependent 7-cyano-7-deazaguanine reductase</fullName>
        <ecNumber evidence="1">1.7.1.13</ecNumber>
    </recommendedName>
    <alternativeName>
        <fullName evidence="1">7-cyano-7-carbaguanine reductase</fullName>
    </alternativeName>
    <alternativeName>
        <fullName evidence="1">NADPH-dependent nitrile oxidoreductase</fullName>
    </alternativeName>
    <alternativeName>
        <fullName evidence="1">PreQ(0) reductase</fullName>
    </alternativeName>
</protein>
<reference key="1">
    <citation type="journal article" date="2002" name="DNA Res.">
        <title>Complete genomic sequence of nitrogen-fixing symbiotic bacterium Bradyrhizobium japonicum USDA110.</title>
        <authorList>
            <person name="Kaneko T."/>
            <person name="Nakamura Y."/>
            <person name="Sato S."/>
            <person name="Minamisawa K."/>
            <person name="Uchiumi T."/>
            <person name="Sasamoto S."/>
            <person name="Watanabe A."/>
            <person name="Idesawa K."/>
            <person name="Iriguchi M."/>
            <person name="Kawashima K."/>
            <person name="Kohara M."/>
            <person name="Matsumoto M."/>
            <person name="Shimpo S."/>
            <person name="Tsuruoka H."/>
            <person name="Wada T."/>
            <person name="Yamada M."/>
            <person name="Tabata S."/>
        </authorList>
    </citation>
    <scope>NUCLEOTIDE SEQUENCE [LARGE SCALE GENOMIC DNA]</scope>
    <source>
        <strain>JCM 10833 / BCRC 13528 / IAM 13628 / NBRC 14792 / USDA 110</strain>
    </source>
</reference>
<dbReference type="EC" id="1.7.1.13" evidence="1"/>
<dbReference type="EMBL" id="BA000040">
    <property type="protein sequence ID" value="BAC50061.1"/>
    <property type="molecule type" value="Genomic_DNA"/>
</dbReference>
<dbReference type="RefSeq" id="NP_771436.1">
    <property type="nucleotide sequence ID" value="NC_004463.1"/>
</dbReference>
<dbReference type="SMR" id="Q89KV4"/>
<dbReference type="STRING" id="224911.AAV28_21275"/>
<dbReference type="EnsemblBacteria" id="BAC50061">
    <property type="protein sequence ID" value="BAC50061"/>
    <property type="gene ID" value="BAC50061"/>
</dbReference>
<dbReference type="KEGG" id="bja:blr4796"/>
<dbReference type="PATRIC" id="fig|224911.5.peg.4874"/>
<dbReference type="eggNOG" id="COG0780">
    <property type="taxonomic scope" value="Bacteria"/>
</dbReference>
<dbReference type="HOGENOM" id="CLU_102489_0_1_5"/>
<dbReference type="InParanoid" id="Q89KV4"/>
<dbReference type="OrthoDB" id="9789995at2"/>
<dbReference type="PhylomeDB" id="Q89KV4"/>
<dbReference type="UniPathway" id="UPA00392"/>
<dbReference type="Proteomes" id="UP000002526">
    <property type="component" value="Chromosome"/>
</dbReference>
<dbReference type="GO" id="GO:0005829">
    <property type="term" value="C:cytosol"/>
    <property type="evidence" value="ECO:0000318"/>
    <property type="project" value="GO_Central"/>
</dbReference>
<dbReference type="GO" id="GO:0033739">
    <property type="term" value="F:preQ1 synthase activity"/>
    <property type="evidence" value="ECO:0000318"/>
    <property type="project" value="GO_Central"/>
</dbReference>
<dbReference type="GO" id="GO:0008616">
    <property type="term" value="P:queuosine biosynthetic process"/>
    <property type="evidence" value="ECO:0000318"/>
    <property type="project" value="GO_Central"/>
</dbReference>
<dbReference type="GO" id="GO:0006400">
    <property type="term" value="P:tRNA modification"/>
    <property type="evidence" value="ECO:0007669"/>
    <property type="project" value="UniProtKB-UniRule"/>
</dbReference>
<dbReference type="Gene3D" id="3.30.1130.10">
    <property type="match status" value="1"/>
</dbReference>
<dbReference type="HAMAP" id="MF_00818">
    <property type="entry name" value="QueF_type1"/>
    <property type="match status" value="1"/>
</dbReference>
<dbReference type="InterPro" id="IPR043133">
    <property type="entry name" value="GTP-CH-I_C/QueF"/>
</dbReference>
<dbReference type="InterPro" id="IPR050084">
    <property type="entry name" value="NADPH_dep_7-cyano-7-deazaG_red"/>
</dbReference>
<dbReference type="InterPro" id="IPR029500">
    <property type="entry name" value="QueF"/>
</dbReference>
<dbReference type="InterPro" id="IPR016856">
    <property type="entry name" value="QueF_type1"/>
</dbReference>
<dbReference type="NCBIfam" id="TIGR03139">
    <property type="entry name" value="QueF-II"/>
    <property type="match status" value="1"/>
</dbReference>
<dbReference type="PANTHER" id="PTHR34354">
    <property type="entry name" value="NADPH-DEPENDENT 7-CYANO-7-DEAZAGUANINE REDUCTASE"/>
    <property type="match status" value="1"/>
</dbReference>
<dbReference type="PANTHER" id="PTHR34354:SF1">
    <property type="entry name" value="NADPH-DEPENDENT 7-CYANO-7-DEAZAGUANINE REDUCTASE"/>
    <property type="match status" value="1"/>
</dbReference>
<dbReference type="Pfam" id="PF14489">
    <property type="entry name" value="QueF"/>
    <property type="match status" value="1"/>
</dbReference>
<dbReference type="PIRSF" id="PIRSF027377">
    <property type="entry name" value="Nitrile_oxidored_QueF"/>
    <property type="match status" value="1"/>
</dbReference>
<dbReference type="SUPFAM" id="SSF55620">
    <property type="entry name" value="Tetrahydrobiopterin biosynthesis enzymes-like"/>
    <property type="match status" value="1"/>
</dbReference>
<keyword id="KW-0963">Cytoplasm</keyword>
<keyword id="KW-0521">NADP</keyword>
<keyword id="KW-0560">Oxidoreductase</keyword>
<keyword id="KW-0671">Queuosine biosynthesis</keyword>
<keyword id="KW-1185">Reference proteome</keyword>
<accession>Q89KV4</accession>
<organism>
    <name type="scientific">Bradyrhizobium diazoefficiens (strain JCM 10833 / BCRC 13528 / IAM 13628 / NBRC 14792 / USDA 110)</name>
    <dbReference type="NCBI Taxonomy" id="224911"/>
    <lineage>
        <taxon>Bacteria</taxon>
        <taxon>Pseudomonadati</taxon>
        <taxon>Pseudomonadota</taxon>
        <taxon>Alphaproteobacteria</taxon>
        <taxon>Hyphomicrobiales</taxon>
        <taxon>Nitrobacteraceae</taxon>
        <taxon>Bradyrhizobium</taxon>
    </lineage>
</organism>
<proteinExistence type="inferred from homology"/>
<comment type="function">
    <text evidence="1">Catalyzes the NADPH-dependent reduction of 7-cyano-7-deazaguanine (preQ0) to 7-aminomethyl-7-deazaguanine (preQ1).</text>
</comment>
<comment type="catalytic activity">
    <reaction evidence="1">
        <text>7-aminomethyl-7-carbaguanine + 2 NADP(+) = 7-cyano-7-deazaguanine + 2 NADPH + 3 H(+)</text>
        <dbReference type="Rhea" id="RHEA:13409"/>
        <dbReference type="ChEBI" id="CHEBI:15378"/>
        <dbReference type="ChEBI" id="CHEBI:45075"/>
        <dbReference type="ChEBI" id="CHEBI:57783"/>
        <dbReference type="ChEBI" id="CHEBI:58349"/>
        <dbReference type="ChEBI" id="CHEBI:58703"/>
        <dbReference type="EC" id="1.7.1.13"/>
    </reaction>
</comment>
<comment type="pathway">
    <text evidence="1">tRNA modification; tRNA-queuosine biosynthesis.</text>
</comment>
<comment type="subcellular location">
    <subcellularLocation>
        <location evidence="1">Cytoplasm</location>
    </subcellularLocation>
</comment>
<comment type="similarity">
    <text evidence="1">Belongs to the GTP cyclohydrolase I family. QueF type 1 subfamily.</text>
</comment>
<sequence length="153" mass="17352">MTTMAKKSLQLGRAVEWPHTPEEAQLDRVPNPQKGTDYLVRFTVPEFTSLCPVTGQPDFAHLMIDYAPGPWLLESKSLKLYIASFRNHGAFHEDCTVMIGKRIASEIKPKWLRIGGYWYPRGGIPIDVFWQTGRVPKGLWVPEQGVAPYRGRG</sequence>
<feature type="chain" id="PRO_0000162963" description="NADPH-dependent 7-cyano-7-deazaguanine reductase">
    <location>
        <begin position="1"/>
        <end position="153"/>
    </location>
</feature>
<feature type="active site" description="Thioimide intermediate" evidence="1">
    <location>
        <position position="51"/>
    </location>
</feature>
<feature type="active site" description="Proton donor" evidence="1">
    <location>
        <position position="58"/>
    </location>
</feature>
<feature type="binding site" evidence="1">
    <location>
        <begin position="73"/>
        <end position="75"/>
    </location>
    <ligand>
        <name>substrate</name>
    </ligand>
</feature>
<feature type="binding site" evidence="1">
    <location>
        <begin position="92"/>
        <end position="93"/>
    </location>
    <ligand>
        <name>substrate</name>
    </ligand>
</feature>
<gene>
    <name evidence="1" type="primary">queF</name>
    <name type="ordered locus">blr4796</name>
</gene>
<name>QUEF_BRADU</name>